<gene>
    <name evidence="1" type="primary">folE2</name>
    <name type="ordered locus">Bamb_3251</name>
</gene>
<reference key="1">
    <citation type="submission" date="2006-08" db="EMBL/GenBank/DDBJ databases">
        <title>Complete sequence of chromosome 2 of Burkholderia cepacia AMMD.</title>
        <authorList>
            <person name="Copeland A."/>
            <person name="Lucas S."/>
            <person name="Lapidus A."/>
            <person name="Barry K."/>
            <person name="Detter J.C."/>
            <person name="Glavina del Rio T."/>
            <person name="Hammon N."/>
            <person name="Israni S."/>
            <person name="Pitluck S."/>
            <person name="Bruce D."/>
            <person name="Chain P."/>
            <person name="Malfatti S."/>
            <person name="Shin M."/>
            <person name="Vergez L."/>
            <person name="Schmutz J."/>
            <person name="Larimer F."/>
            <person name="Land M."/>
            <person name="Hauser L."/>
            <person name="Kyrpides N."/>
            <person name="Kim E."/>
            <person name="Parke J."/>
            <person name="Coenye T."/>
            <person name="Konstantinidis K."/>
            <person name="Ramette A."/>
            <person name="Tiedje J."/>
            <person name="Richardson P."/>
        </authorList>
    </citation>
    <scope>NUCLEOTIDE SEQUENCE [LARGE SCALE GENOMIC DNA]</scope>
    <source>
        <strain>ATCC BAA-244 / DSM 16087 / CCUG 44356 / LMG 19182 / AMMD</strain>
    </source>
</reference>
<proteinExistence type="inferred from homology"/>
<feature type="chain" id="PRO_0000289479" description="GTP cyclohydrolase FolE2">
    <location>
        <begin position="1"/>
        <end position="269"/>
    </location>
</feature>
<feature type="site" description="May be catalytically important" evidence="1">
    <location>
        <position position="154"/>
    </location>
</feature>
<organism>
    <name type="scientific">Burkholderia ambifaria (strain ATCC BAA-244 / DSM 16087 / CCUG 44356 / LMG 19182 / AMMD)</name>
    <name type="common">Burkholderia cepacia (strain AMMD)</name>
    <dbReference type="NCBI Taxonomy" id="339670"/>
    <lineage>
        <taxon>Bacteria</taxon>
        <taxon>Pseudomonadati</taxon>
        <taxon>Pseudomonadota</taxon>
        <taxon>Betaproteobacteria</taxon>
        <taxon>Burkholderiales</taxon>
        <taxon>Burkholderiaceae</taxon>
        <taxon>Burkholderia</taxon>
        <taxon>Burkholderia cepacia complex</taxon>
    </lineage>
</organism>
<comment type="function">
    <text evidence="1">Converts GTP to 7,8-dihydroneopterin triphosphate.</text>
</comment>
<comment type="catalytic activity">
    <reaction evidence="1">
        <text>GTP + H2O = 7,8-dihydroneopterin 3'-triphosphate + formate + H(+)</text>
        <dbReference type="Rhea" id="RHEA:17473"/>
        <dbReference type="ChEBI" id="CHEBI:15377"/>
        <dbReference type="ChEBI" id="CHEBI:15378"/>
        <dbReference type="ChEBI" id="CHEBI:15740"/>
        <dbReference type="ChEBI" id="CHEBI:37565"/>
        <dbReference type="ChEBI" id="CHEBI:58462"/>
        <dbReference type="EC" id="3.5.4.16"/>
    </reaction>
</comment>
<comment type="pathway">
    <text evidence="1">Cofactor biosynthesis; 7,8-dihydroneopterin triphosphate biosynthesis; 7,8-dihydroneopterin triphosphate from GTP: step 1/1.</text>
</comment>
<comment type="similarity">
    <text evidence="1">Belongs to the GTP cyclohydrolase IV family.</text>
</comment>
<name>GCH4_BURCM</name>
<evidence type="ECO:0000255" key="1">
    <source>
        <dbReference type="HAMAP-Rule" id="MF_01527"/>
    </source>
</evidence>
<dbReference type="EC" id="3.5.4.16" evidence="1"/>
<dbReference type="EMBL" id="CP000441">
    <property type="protein sequence ID" value="ABI88806.1"/>
    <property type="molecule type" value="Genomic_DNA"/>
</dbReference>
<dbReference type="RefSeq" id="WP_011658296.1">
    <property type="nucleotide sequence ID" value="NC_008391.1"/>
</dbReference>
<dbReference type="SMR" id="Q0BAL7"/>
<dbReference type="GeneID" id="93086263"/>
<dbReference type="KEGG" id="bam:Bamb_3251"/>
<dbReference type="PATRIC" id="fig|339670.21.peg.3456"/>
<dbReference type="eggNOG" id="COG1469">
    <property type="taxonomic scope" value="Bacteria"/>
</dbReference>
<dbReference type="UniPathway" id="UPA00848">
    <property type="reaction ID" value="UER00151"/>
</dbReference>
<dbReference type="Proteomes" id="UP000000662">
    <property type="component" value="Chromosome 2"/>
</dbReference>
<dbReference type="GO" id="GO:0003934">
    <property type="term" value="F:GTP cyclohydrolase I activity"/>
    <property type="evidence" value="ECO:0007669"/>
    <property type="project" value="UniProtKB-UniRule"/>
</dbReference>
<dbReference type="GO" id="GO:0046654">
    <property type="term" value="P:tetrahydrofolate biosynthetic process"/>
    <property type="evidence" value="ECO:0007669"/>
    <property type="project" value="UniProtKB-UniRule"/>
</dbReference>
<dbReference type="Gene3D" id="3.10.270.10">
    <property type="entry name" value="Urate Oxidase"/>
    <property type="match status" value="1"/>
</dbReference>
<dbReference type="HAMAP" id="MF_01527_B">
    <property type="entry name" value="GTP_cyclohydrol_B"/>
    <property type="match status" value="1"/>
</dbReference>
<dbReference type="InterPro" id="IPR022838">
    <property type="entry name" value="GTP_cyclohydrolase_FolE2"/>
</dbReference>
<dbReference type="InterPro" id="IPR003801">
    <property type="entry name" value="GTP_cyclohydrolase_FolE2/MptA"/>
</dbReference>
<dbReference type="NCBIfam" id="NF010200">
    <property type="entry name" value="PRK13674.1-1"/>
    <property type="match status" value="1"/>
</dbReference>
<dbReference type="PANTHER" id="PTHR36445">
    <property type="entry name" value="GTP CYCLOHYDROLASE MPTA"/>
    <property type="match status" value="1"/>
</dbReference>
<dbReference type="PANTHER" id="PTHR36445:SF1">
    <property type="entry name" value="GTP CYCLOHYDROLASE MPTA"/>
    <property type="match status" value="1"/>
</dbReference>
<dbReference type="Pfam" id="PF02649">
    <property type="entry name" value="GCHY-1"/>
    <property type="match status" value="1"/>
</dbReference>
<accession>Q0BAL7</accession>
<keyword id="KW-0378">Hydrolase</keyword>
<sequence length="269" mass="30245">MNQMNPAFVMPDVQSTVDTRQIPIQRVGVKAVRHPLTVRTESGDVQPTVGVWNLDVHLPADQKGTHMSRFVALLEDSREPLTVERFRAMLASMLVRLEAEAGRIEVTFPYFVNKTAPVSGVQSLLDYEVTLAGESRNGETRLFLKVLVPVTSLCPCSKKISQYGAHNQRSHVTIDAELAADLPVEALIRIAEEEASCELWGLLKRPDEKFVTERAYENPKFVEDLVRDVAQRLDADERVVAYVLEAENFESIHNHSAYALIERDKRHAA</sequence>
<protein>
    <recommendedName>
        <fullName evidence="1">GTP cyclohydrolase FolE2</fullName>
        <ecNumber evidence="1">3.5.4.16</ecNumber>
    </recommendedName>
</protein>